<proteinExistence type="evidence at transcript level"/>
<gene>
    <name type="primary">CDKN1B</name>
    <name type="synonym">KIP1</name>
</gene>
<keyword id="KW-0131">Cell cycle</keyword>
<keyword id="KW-0963">Cytoplasm</keyword>
<keyword id="KW-0967">Endosome</keyword>
<keyword id="KW-0539">Nucleus</keyword>
<keyword id="KW-0597">Phosphoprotein</keyword>
<keyword id="KW-0649">Protein kinase inhibitor</keyword>
<keyword id="KW-1185">Reference proteome</keyword>
<keyword id="KW-0832">Ubl conjugation</keyword>
<organism>
    <name type="scientific">Canis lupus familiaris</name>
    <name type="common">Dog</name>
    <name type="synonym">Canis familiaris</name>
    <dbReference type="NCBI Taxonomy" id="9615"/>
    <lineage>
        <taxon>Eukaryota</taxon>
        <taxon>Metazoa</taxon>
        <taxon>Chordata</taxon>
        <taxon>Craniata</taxon>
        <taxon>Vertebrata</taxon>
        <taxon>Euteleostomi</taxon>
        <taxon>Mammalia</taxon>
        <taxon>Eutheria</taxon>
        <taxon>Laurasiatheria</taxon>
        <taxon>Carnivora</taxon>
        <taxon>Caniformia</taxon>
        <taxon>Canidae</taxon>
        <taxon>Canis</taxon>
    </lineage>
</organism>
<reference key="1">
    <citation type="submission" date="2003-10" db="EMBL/GenBank/DDBJ databases">
        <title>Differential gene expression of regenerative and fibrotic pathways in canine hepatic portosystemic shunt and portal vein hypoplasia.</title>
        <authorList>
            <person name="Spee B."/>
            <person name="Penning L.C."/>
            <person name="Rothuizen J."/>
        </authorList>
    </citation>
    <scope>NUCLEOTIDE SEQUENCE [MRNA]</scope>
    <source>
        <tissue>Liver</tissue>
    </source>
</reference>
<feature type="chain" id="PRO_0000190081" description="Cyclin-dependent kinase inhibitor 1B">
    <location>
        <begin position="1"/>
        <end position="198"/>
    </location>
</feature>
<feature type="region of interest" description="Disordered" evidence="5">
    <location>
        <begin position="1"/>
        <end position="30"/>
    </location>
</feature>
<feature type="region of interest" description="Interaction with CDK2" evidence="3">
    <location>
        <begin position="51"/>
        <end position="91"/>
    </location>
</feature>
<feature type="region of interest" description="Disordered" evidence="5">
    <location>
        <begin position="87"/>
        <end position="198"/>
    </location>
</feature>
<feature type="short sequence motif" description="Nuclear localization signal" evidence="4">
    <location>
        <begin position="153"/>
        <end position="169"/>
    </location>
</feature>
<feature type="compositionally biased region" description="Polar residues" evidence="5">
    <location>
        <begin position="1"/>
        <end position="12"/>
    </location>
</feature>
<feature type="compositionally biased region" description="Basic and acidic residues" evidence="5">
    <location>
        <begin position="13"/>
        <end position="22"/>
    </location>
</feature>
<feature type="compositionally biased region" description="Polar residues" evidence="5">
    <location>
        <begin position="104"/>
        <end position="113"/>
    </location>
</feature>
<feature type="compositionally biased region" description="Basic and acidic residues" evidence="5">
    <location>
        <begin position="126"/>
        <end position="137"/>
    </location>
</feature>
<feature type="compositionally biased region" description="Polar residues" evidence="5">
    <location>
        <begin position="175"/>
        <end position="186"/>
    </location>
</feature>
<feature type="modified residue" description="Phosphoserine; by UHMK1" evidence="3">
    <location>
        <position position="10"/>
    </location>
</feature>
<feature type="modified residue" description="Phosphotyrosine; by SRC" evidence="3">
    <location>
        <position position="74"/>
    </location>
</feature>
<feature type="modified residue" description="Phosphotyrosine; by ABL, LYN and SRC" evidence="3">
    <location>
        <position position="88"/>
    </location>
</feature>
<feature type="modified residue" description="Phosphotyrosine" evidence="3">
    <location>
        <position position="89"/>
    </location>
</feature>
<feature type="modified residue" description="Phosphothreonine; by CaMK1, PKB/AKT1 and PIM1" evidence="3">
    <location>
        <position position="157"/>
    </location>
</feature>
<feature type="modified residue" description="Phosphothreonine" evidence="2">
    <location>
        <position position="170"/>
    </location>
</feature>
<feature type="modified residue" description="Phosphothreonine; by PKB/AKT1, CDK1 and CDK2" evidence="3">
    <location>
        <position position="187"/>
    </location>
</feature>
<feature type="modified residue" description="Phosphothreonine; by CaMK1, PKB/AKT1, RPS6KA1, RPS6KA3 and PIM1" evidence="3">
    <location>
        <position position="198"/>
    </location>
</feature>
<name>CDN1B_CANLF</name>
<accession>Q6SLL5</accession>
<evidence type="ECO:0000250" key="1"/>
<evidence type="ECO:0000250" key="2">
    <source>
        <dbReference type="UniProtKB" id="P46414"/>
    </source>
</evidence>
<evidence type="ECO:0000250" key="3">
    <source>
        <dbReference type="UniProtKB" id="P46527"/>
    </source>
</evidence>
<evidence type="ECO:0000255" key="4"/>
<evidence type="ECO:0000256" key="5">
    <source>
        <dbReference type="SAM" id="MobiDB-lite"/>
    </source>
</evidence>
<evidence type="ECO:0000305" key="6"/>
<protein>
    <recommendedName>
        <fullName>Cyclin-dependent kinase inhibitor 1B</fullName>
    </recommendedName>
    <alternativeName>
        <fullName>Cyclin-dependent kinase inhibitor p27</fullName>
    </alternativeName>
    <alternativeName>
        <fullName>p27Kip1</fullName>
    </alternativeName>
</protein>
<comment type="function">
    <text evidence="3">Important regulator of cell cycle progression. Inhibits the kinase activity of CDK2 bound to cyclin A, but has little inhibitory activity on CDK2 bound to SPDYA. Involved in G1 arrest. Potent inhibitor of cyclin E- and cyclin A-CDK2 complexes. Forms a complex with cyclin type D-CDK4 complexes and is involved in the assembly, stability, and modulation of CCND1-CDK4 complex activation. Acts either as an inhibitor or an activator of cyclin type D-CDK4 complexes depending on its phosphorylation state and/or stoichometry.</text>
</comment>
<comment type="subunit">
    <text evidence="1 3">Forms a ternary complex composed of CCNE1, CDK2 and CDKN1B. Interacts directly with CCNE1; the interaction is inhibited by CDK2-dependent phosphorylation on Thr-187. Interacts with COPS5, subunit of the COP9 signalosome complex; the interaction leads to CDKN1B degradation. Interacts with NUP50; the interaction leads to nuclear import and degradation of phosphorylated CDKN1B. Interacts with CCND1 and SNX6 (By similarity). Interacts (Thr-198-phosphorylated form) with 14-3-3 proteins, binds strongly YWHAQ, weakly YWHAE and YWHAH, but not YWHAB nor YWHAZ; the interaction with YWHAQ results in translocation to the cytoplasm. Interacts with AKT1 and LYN; the interactions lead to cytoplasmic mislocation, phosphorylation of CDKN1B and inhibition of cell cycle arrest. Forms a ternary complex with CCNA2 and CDK2; CDKN1B inhibits the kinase activity of CDK2 through conformational rearrangements. Interacts (unphosphorylated form) with CDK2. Forms a complex with CDK2 and SPDYA, but does not directly interact with SPDYA. Forms a ternary complex composed of cyclin D, CDK4 and CDKN1B. Interacts (phosphorylated on Tyr-88 and Tyr-89) with CDK4; the interaction is required for cyclin D and CDK4 complex assembly, induces nuclear translocation and activates the CDK4 kinase activity. Interacts with GRB2. Interacts with PIM1. Identified in a complex with SKP1, SKP2 and CKS1B. Interacts with UHMK1; the interaction leads to cytoplasmic mislocation, phosphorylation of CDKN1B and inhibition of cell cycle arrest. Also interacts with CDK1. Dephosphorylated on Thr-187 by PPM1H, leading to CDKN1B stability (By similarity).</text>
</comment>
<comment type="subcellular location">
    <subcellularLocation>
        <location evidence="1">Nucleus</location>
    </subcellularLocation>
    <subcellularLocation>
        <location evidence="1">Cytoplasm</location>
    </subcellularLocation>
    <subcellularLocation>
        <location evidence="1">Endosome</location>
    </subcellularLocation>
    <text evidence="1">Nuclear and cytoplasmic in quiescent cells. AKT- or RSK-mediated phosphorylation on Thr-198, binds 14-3-3, translocates to the cytoplasm and promotes cell cycle progression. Mitogen-activated UHMK1 phosphorylation on Ser-10 also results in translocation to the cytoplasm and cell cycle progression. Phosphorylation on Ser-10 facilitates nuclear export. Translocates to the nucleus on phosphorylation of Tyr-88 and Tyr-89 (By similarity). Colocalizes at the endosome with SNX6; this leads to lysosomal degradation (By similarity).</text>
</comment>
<comment type="domain">
    <text evidence="1">A peptide sequence containing only AA 28-79 retains substantial Kip1 cyclin A/CDK2 inhibitory activity.</text>
</comment>
<comment type="PTM">
    <text evidence="3">Phosphorylated; phosphorylation occurs on serine, threonine and tyrosine residues. Phosphorylation on Ser-10 is the major site of phosphorylation in resting cells, takes place at the G(0)-G(1) phase and leads to protein stability. Phosphorylation on other sites is greatly enhanced by mitogens, growth factors, cMYC and in certain cancer cell lines. The phosphorylated form found in the cytoplasm is inactivate. Phosphorylation on Thr-198 is required for interaction with 14-3-3 proteins. Phosphorylation on Thr-187, by CDK1 and CDK2 leads to protein ubiquitination and proteasomal degradation. Tyrosine phosphorylation promotes this process. Phosphorylation by PKB/AKT1 can be suppressed by LY294002, an inhibitor of the catalytic subunit of PI3K. Phosphorylation on Tyr-88 and Tyr-89 has no effect on binding CDK2, but is required for binding CDK4. Dephosphorylated on tyrosine residues by G-CSF (By similarity). Dephosphorylated on Thr-187 by PPM1H, leading to CDKN1B stability (By similarity).</text>
</comment>
<comment type="PTM">
    <text evidence="1">Ubiquitinated; in the cytoplasm by the KPC complex (composed of RNF123/KPC1 and UBAC1/KPC2) and, in the nucleus, by SCF(SKP2). The latter requires prior phosphorylation on Thr-187. Ubiquitinated; by a TRIM21-containing SCF(SKP2)-like complex; leads to its degradation (By similarity).</text>
</comment>
<comment type="PTM">
    <text evidence="1">Subject to degradation in the lysosome. Interaction with SNX6 promotes lysosomal degradation (By similarity).</text>
</comment>
<comment type="similarity">
    <text evidence="6">Belongs to the CDI family.</text>
</comment>
<sequence length="198" mass="22117">MSNVRVSNGSPTSERRDAKQAEYPKPSACRNLFGPVNHEELTRDLEKHCIDMEEASQNKWNFDFQNHKPLEGKYEWQEVEKGSLPEFYYRPPRPPKGACKVPAQESQDVSGTRQAGPLLGSQANSEDTHLVDQKTDAPDSQTGLAEQCTGIRKRPATDDSSPQNKRANRTEENVSDGSPNAGSVEQTPKKPGLRRRQT</sequence>
<dbReference type="EMBL" id="AY455798">
    <property type="protein sequence ID" value="AAR19221.1"/>
    <property type="molecule type" value="mRNA"/>
</dbReference>
<dbReference type="SMR" id="Q6SLL5"/>
<dbReference type="FunCoup" id="Q6SLL5">
    <property type="interactions" value="460"/>
</dbReference>
<dbReference type="STRING" id="9615.ENSCAFP00000019502"/>
<dbReference type="PaxDb" id="9612-ENSCAFP00000019502"/>
<dbReference type="eggNOG" id="KOG4743">
    <property type="taxonomic scope" value="Eukaryota"/>
</dbReference>
<dbReference type="InParanoid" id="Q6SLL5"/>
<dbReference type="OrthoDB" id="6373236at2759"/>
<dbReference type="Proteomes" id="UP000002254">
    <property type="component" value="Unplaced"/>
</dbReference>
<dbReference type="Proteomes" id="UP000694429">
    <property type="component" value="Unplaced"/>
</dbReference>
<dbReference type="Proteomes" id="UP000694542">
    <property type="component" value="Unplaced"/>
</dbReference>
<dbReference type="Proteomes" id="UP000805418">
    <property type="component" value="Unplaced"/>
</dbReference>
<dbReference type="GO" id="GO:0005737">
    <property type="term" value="C:cytoplasm"/>
    <property type="evidence" value="ECO:0000318"/>
    <property type="project" value="GO_Central"/>
</dbReference>
<dbReference type="GO" id="GO:0005768">
    <property type="term" value="C:endosome"/>
    <property type="evidence" value="ECO:0007669"/>
    <property type="project" value="UniProtKB-SubCell"/>
</dbReference>
<dbReference type="GO" id="GO:0005634">
    <property type="term" value="C:nucleus"/>
    <property type="evidence" value="ECO:0000318"/>
    <property type="project" value="GO_Central"/>
</dbReference>
<dbReference type="GO" id="GO:0004861">
    <property type="term" value="F:cyclin-dependent protein serine/threonine kinase inhibitor activity"/>
    <property type="evidence" value="ECO:0000250"/>
    <property type="project" value="UniProtKB"/>
</dbReference>
<dbReference type="GO" id="GO:0051087">
    <property type="term" value="F:protein-folding chaperone binding"/>
    <property type="evidence" value="ECO:0000318"/>
    <property type="project" value="GO_Central"/>
</dbReference>
<dbReference type="GO" id="GO:0000082">
    <property type="term" value="P:G1/S transition of mitotic cell cycle"/>
    <property type="evidence" value="ECO:0000318"/>
    <property type="project" value="GO_Central"/>
</dbReference>
<dbReference type="GO" id="GO:0045736">
    <property type="term" value="P:negative regulation of cyclin-dependent protein serine/threonine kinase activity"/>
    <property type="evidence" value="ECO:0000250"/>
    <property type="project" value="UniProtKB"/>
</dbReference>
<dbReference type="GO" id="GO:0050680">
    <property type="term" value="P:negative regulation of epithelial cell proliferation"/>
    <property type="evidence" value="ECO:0000318"/>
    <property type="project" value="GO_Central"/>
</dbReference>
<dbReference type="GO" id="GO:0045930">
    <property type="term" value="P:negative regulation of mitotic cell cycle"/>
    <property type="evidence" value="ECO:0000318"/>
    <property type="project" value="GO_Central"/>
</dbReference>
<dbReference type="FunFam" id="4.10.365.10:FF:000001">
    <property type="entry name" value="Cyclin-dependent kinase inhibitor 1B"/>
    <property type="match status" value="1"/>
</dbReference>
<dbReference type="Gene3D" id="4.10.365.10">
    <property type="entry name" value="p27"/>
    <property type="match status" value="1"/>
</dbReference>
<dbReference type="InterPro" id="IPR003175">
    <property type="entry name" value="CDI_dom"/>
</dbReference>
<dbReference type="InterPro" id="IPR044898">
    <property type="entry name" value="CDI_dom_sf"/>
</dbReference>
<dbReference type="PANTHER" id="PTHR10265">
    <property type="entry name" value="CYCLIN-DEPENDENT KINASE INHIBITOR 1"/>
    <property type="match status" value="1"/>
</dbReference>
<dbReference type="PANTHER" id="PTHR10265:SF9">
    <property type="entry name" value="CYCLIN-DEPENDENT KINASE INHIBITOR 1B"/>
    <property type="match status" value="1"/>
</dbReference>
<dbReference type="Pfam" id="PF02234">
    <property type="entry name" value="CDI"/>
    <property type="match status" value="1"/>
</dbReference>